<feature type="chain" id="PRO_0000279397" description="DNA-directed primase/polymerase protein">
    <location>
        <begin position="1"/>
        <end position="523"/>
    </location>
</feature>
<feature type="region of interest" description="Disordered" evidence="3">
    <location>
        <begin position="203"/>
        <end position="230"/>
    </location>
</feature>
<feature type="region of interest" description="Disordered" evidence="3">
    <location>
        <begin position="467"/>
        <end position="523"/>
    </location>
</feature>
<feature type="short sequence motif" description="Zinc knuckle motif" evidence="2">
    <location>
        <begin position="390"/>
        <end position="423"/>
    </location>
</feature>
<feature type="compositionally biased region" description="Low complexity" evidence="3">
    <location>
        <begin position="467"/>
        <end position="477"/>
    </location>
</feature>
<feature type="compositionally biased region" description="Acidic residues" evidence="3">
    <location>
        <begin position="478"/>
        <end position="488"/>
    </location>
</feature>
<feature type="compositionally biased region" description="Acidic residues" evidence="3">
    <location>
        <begin position="498"/>
        <end position="512"/>
    </location>
</feature>
<feature type="binding site" evidence="2">
    <location>
        <position position="78"/>
    </location>
    <ligand>
        <name>substrate</name>
    </ligand>
</feature>
<feature type="binding site" evidence="2">
    <location>
        <begin position="117"/>
        <end position="119"/>
    </location>
    <ligand>
        <name>substrate</name>
    </ligand>
</feature>
<feature type="binding site" evidence="2">
    <location>
        <position position="117"/>
    </location>
    <ligand>
        <name>Mn(2+)</name>
        <dbReference type="ChEBI" id="CHEBI:29035"/>
        <note>catalytic</note>
    </ligand>
</feature>
<feature type="binding site" evidence="2">
    <location>
        <position position="119"/>
    </location>
    <ligand>
        <name>Mn(2+)</name>
        <dbReference type="ChEBI" id="CHEBI:29035"/>
        <note>catalytic</note>
    </ligand>
</feature>
<feature type="binding site" evidence="2">
    <location>
        <begin position="168"/>
        <end position="172"/>
    </location>
    <ligand>
        <name>substrate</name>
    </ligand>
</feature>
<feature type="binding site" evidence="2">
    <location>
        <begin position="258"/>
        <end position="261"/>
    </location>
    <ligand>
        <name>substrate</name>
    </ligand>
</feature>
<feature type="binding site" evidence="2">
    <location>
        <position position="267"/>
    </location>
    <ligand>
        <name>substrate</name>
    </ligand>
</feature>
<feature type="binding site" evidence="2">
    <location>
        <position position="390"/>
    </location>
    <ligand>
        <name>Zn(2+)</name>
        <dbReference type="ChEBI" id="CHEBI:29105"/>
    </ligand>
</feature>
<feature type="binding site" evidence="2">
    <location>
        <position position="397"/>
    </location>
    <ligand>
        <name>Zn(2+)</name>
        <dbReference type="ChEBI" id="CHEBI:29105"/>
    </ligand>
</feature>
<feature type="binding site" evidence="2">
    <location>
        <position position="417"/>
    </location>
    <ligand>
        <name>Zn(2+)</name>
        <dbReference type="ChEBI" id="CHEBI:29105"/>
    </ligand>
</feature>
<feature type="binding site" evidence="2">
    <location>
        <position position="422"/>
    </location>
    <ligand>
        <name>Zn(2+)</name>
        <dbReference type="ChEBI" id="CHEBI:29105"/>
    </ligand>
</feature>
<feature type="sequence conflict" description="In Ref. 2; AAI08067." evidence="5" ref="2">
    <original>H</original>
    <variation>N</variation>
    <location>
        <position position="193"/>
    </location>
</feature>
<feature type="sequence conflict" description="In Ref. 2; AAI08067." evidence="5" ref="2">
    <original>E</original>
    <variation>Q</variation>
    <location>
        <position position="331"/>
    </location>
</feature>
<feature type="sequence conflict" description="In Ref. 2; AAI08067." evidence="5" ref="2">
    <original>L</original>
    <variation>Q</variation>
    <location>
        <position position="340"/>
    </location>
</feature>
<feature type="sequence conflict" description="In Ref. 2; AAI08067." evidence="5" ref="2">
    <original>T</original>
    <variation>A</variation>
    <location>
        <position position="475"/>
    </location>
</feature>
<feature type="sequence conflict" description="In Ref. 2; AAI08067." evidence="5" ref="2">
    <original>Q</original>
    <variation>H</variation>
    <location>
        <position position="497"/>
    </location>
</feature>
<dbReference type="EC" id="2.7.7.102" evidence="2"/>
<dbReference type="EC" id="2.7.7.7" evidence="2"/>
<dbReference type="EMBL" id="BX284619">
    <property type="status" value="NOT_ANNOTATED_CDS"/>
    <property type="molecule type" value="Genomic_DNA"/>
</dbReference>
<dbReference type="EMBL" id="BC108066">
    <property type="protein sequence ID" value="AAI08067.1"/>
    <property type="molecule type" value="mRNA"/>
</dbReference>
<dbReference type="RefSeq" id="NP_001032455.2">
    <property type="nucleotide sequence ID" value="NM_001037378.2"/>
</dbReference>
<dbReference type="SMR" id="Q32PL8"/>
<dbReference type="FunCoup" id="Q32PL8">
    <property type="interactions" value="1240"/>
</dbReference>
<dbReference type="STRING" id="7955.ENSDARP00000022890"/>
<dbReference type="PaxDb" id="7955-ENSDARP00000022890"/>
<dbReference type="Ensembl" id="ENSDART00000006147">
    <property type="protein sequence ID" value="ENSDARP00000022890"/>
    <property type="gene ID" value="ENSDARG00000033273"/>
</dbReference>
<dbReference type="GeneID" id="556571"/>
<dbReference type="KEGG" id="dre:556571"/>
<dbReference type="AGR" id="ZFIN:ZDB-GENE-051113-100"/>
<dbReference type="CTD" id="201973"/>
<dbReference type="ZFIN" id="ZDB-GENE-051113-100">
    <property type="gene designation" value="primpol"/>
</dbReference>
<dbReference type="eggNOG" id="ENOG502QS1Q">
    <property type="taxonomic scope" value="Eukaryota"/>
</dbReference>
<dbReference type="HOGENOM" id="CLU_027838_0_0_1"/>
<dbReference type="InParanoid" id="Q32PL8"/>
<dbReference type="OMA" id="HYEVIQD"/>
<dbReference type="OrthoDB" id="5988181at2759"/>
<dbReference type="PhylomeDB" id="Q32PL8"/>
<dbReference type="TreeFam" id="TF328961"/>
<dbReference type="PRO" id="PR:Q32PL8"/>
<dbReference type="Proteomes" id="UP000000437">
    <property type="component" value="Alternate scaffold 1"/>
</dbReference>
<dbReference type="Proteomes" id="UP000000437">
    <property type="component" value="Chromosome 1"/>
</dbReference>
<dbReference type="Bgee" id="ENSDARG00000033273">
    <property type="expression patterns" value="Expressed in testis and 21 other cell types or tissues"/>
</dbReference>
<dbReference type="ExpressionAtlas" id="Q32PL8">
    <property type="expression patterns" value="baseline and differential"/>
</dbReference>
<dbReference type="GO" id="GO:0000428">
    <property type="term" value="C:DNA-directed RNA polymerase complex"/>
    <property type="evidence" value="ECO:0007669"/>
    <property type="project" value="UniProtKB-KW"/>
</dbReference>
<dbReference type="GO" id="GO:0005759">
    <property type="term" value="C:mitochondrial matrix"/>
    <property type="evidence" value="ECO:0000250"/>
    <property type="project" value="UniProtKB"/>
</dbReference>
<dbReference type="GO" id="GO:0005634">
    <property type="term" value="C:nucleus"/>
    <property type="evidence" value="ECO:0000250"/>
    <property type="project" value="UniProtKB"/>
</dbReference>
<dbReference type="GO" id="GO:0005657">
    <property type="term" value="C:replication fork"/>
    <property type="evidence" value="ECO:0000250"/>
    <property type="project" value="UniProtKB"/>
</dbReference>
<dbReference type="GO" id="GO:0003682">
    <property type="term" value="F:chromatin binding"/>
    <property type="evidence" value="ECO:0000250"/>
    <property type="project" value="UniProtKB"/>
</dbReference>
<dbReference type="GO" id="GO:0003887">
    <property type="term" value="F:DNA-directed DNA polymerase activity"/>
    <property type="evidence" value="ECO:0000250"/>
    <property type="project" value="UniProtKB"/>
</dbReference>
<dbReference type="GO" id="GO:0003899">
    <property type="term" value="F:DNA-directed RNA polymerase activity"/>
    <property type="evidence" value="ECO:0000250"/>
    <property type="project" value="UniProtKB"/>
</dbReference>
<dbReference type="GO" id="GO:0030145">
    <property type="term" value="F:manganese ion binding"/>
    <property type="evidence" value="ECO:0000250"/>
    <property type="project" value="UniProtKB"/>
</dbReference>
<dbReference type="GO" id="GO:0008270">
    <property type="term" value="F:zinc ion binding"/>
    <property type="evidence" value="ECO:0000250"/>
    <property type="project" value="UniProtKB"/>
</dbReference>
<dbReference type="GO" id="GO:0042276">
    <property type="term" value="P:error-prone translesion synthesis"/>
    <property type="evidence" value="ECO:0000250"/>
    <property type="project" value="UniProtKB"/>
</dbReference>
<dbReference type="GO" id="GO:0043504">
    <property type="term" value="P:mitochondrial DNA repair"/>
    <property type="evidence" value="ECO:0000250"/>
    <property type="project" value="UniProtKB"/>
</dbReference>
<dbReference type="GO" id="GO:0006264">
    <property type="term" value="P:mitochondrial DNA replication"/>
    <property type="evidence" value="ECO:0000250"/>
    <property type="project" value="UniProtKB"/>
</dbReference>
<dbReference type="GO" id="GO:0062176">
    <property type="term" value="P:R-loop processing"/>
    <property type="evidence" value="ECO:0000250"/>
    <property type="project" value="UniProtKB"/>
</dbReference>
<dbReference type="GO" id="GO:0031297">
    <property type="term" value="P:replication fork processing"/>
    <property type="evidence" value="ECO:0000250"/>
    <property type="project" value="UniProtKB"/>
</dbReference>
<dbReference type="GO" id="GO:0009411">
    <property type="term" value="P:response to UV"/>
    <property type="evidence" value="ECO:0000250"/>
    <property type="project" value="UniProtKB"/>
</dbReference>
<dbReference type="GO" id="GO:0019985">
    <property type="term" value="P:translesion synthesis"/>
    <property type="evidence" value="ECO:0000250"/>
    <property type="project" value="UniProtKB"/>
</dbReference>
<dbReference type="InterPro" id="IPR044917">
    <property type="entry name" value="PRIMPOL"/>
</dbReference>
<dbReference type="PANTHER" id="PTHR31399">
    <property type="entry name" value="DNA-DIRECTED PRIMASE / POLYMERASE PROTEIN"/>
    <property type="match status" value="1"/>
</dbReference>
<dbReference type="PANTHER" id="PTHR31399:SF0">
    <property type="entry name" value="DNA-DIRECTED PRIMASE_POLYMERASE PROTEIN"/>
    <property type="match status" value="1"/>
</dbReference>
<dbReference type="Pfam" id="PF03121">
    <property type="entry name" value="Herpes_UL52"/>
    <property type="match status" value="1"/>
</dbReference>
<evidence type="ECO:0000250" key="1">
    <source>
        <dbReference type="UniProtKB" id="A0A3Q2TTB3"/>
    </source>
</evidence>
<evidence type="ECO:0000250" key="2">
    <source>
        <dbReference type="UniProtKB" id="Q96LW4"/>
    </source>
</evidence>
<evidence type="ECO:0000256" key="3">
    <source>
        <dbReference type="SAM" id="MobiDB-lite"/>
    </source>
</evidence>
<evidence type="ECO:0000303" key="4">
    <source ref="2"/>
</evidence>
<evidence type="ECO:0000305" key="5"/>
<sequence length="523" mass="60194">MTGGKWQDRVKSVEQRASSFQSSPLSCPYKPRLSQPWQPSSIWRLFPRQNAAIAFAQHIKQDVHIFSLEKEGSDAGQRIFLVTSYSELWHYYSTHRHSLMHCYEVILEGAVCKLYFDLEFHKASNKNLDGKMMVAKLIQYVCEKLEEVYGLHCSAKDVLDLDSSTSDKFSHHLIFMLPNAAFKDNSHVGRFIHDILHPALTNLKKSNPEAPGENRDDVEGTQAKRRKTEENDLGFLTVKNEKGQEQLFVDLGVYTKNRNFRLYKSSKLGKNAAFIVAEDNKFVPNPSKQITKDERIFLASLITNVSFTGQRILTYDMTQKSTAGSECPTLERESHSSDLLGDQKTSPFKEVDEFVLTLVCKDGIQGSIRRWNYFACEQLLVYDIEKFRWCHNVKRFHKSNNIIIVVDLKEEVWYQKCHDPECRRQNYRSSSFPLPQEVCMSHLLMEDEEDQAYLTDELGNIELAVTAPAESTSTTPSEDTEGWGDWPDDPAYLRALQEVEEEEEDEDEEVPDELLLQAVNECE</sequence>
<protein>
    <recommendedName>
        <fullName evidence="2">DNA-directed primase/polymerase protein</fullName>
        <ecNumber evidence="2">2.7.7.102</ecNumber>
        <ecNumber evidence="2">2.7.7.7</ecNumber>
    </recommendedName>
</protein>
<proteinExistence type="evidence at transcript level"/>
<reference key="1">
    <citation type="journal article" date="2013" name="Nature">
        <title>The zebrafish reference genome sequence and its relationship to the human genome.</title>
        <authorList>
            <person name="Howe K."/>
            <person name="Clark M.D."/>
            <person name="Torroja C.F."/>
            <person name="Torrance J."/>
            <person name="Berthelot C."/>
            <person name="Muffato M."/>
            <person name="Collins J.E."/>
            <person name="Humphray S."/>
            <person name="McLaren K."/>
            <person name="Matthews L."/>
            <person name="McLaren S."/>
            <person name="Sealy I."/>
            <person name="Caccamo M."/>
            <person name="Churcher C."/>
            <person name="Scott C."/>
            <person name="Barrett J.C."/>
            <person name="Koch R."/>
            <person name="Rauch G.J."/>
            <person name="White S."/>
            <person name="Chow W."/>
            <person name="Kilian B."/>
            <person name="Quintais L.T."/>
            <person name="Guerra-Assuncao J.A."/>
            <person name="Zhou Y."/>
            <person name="Gu Y."/>
            <person name="Yen J."/>
            <person name="Vogel J.H."/>
            <person name="Eyre T."/>
            <person name="Redmond S."/>
            <person name="Banerjee R."/>
            <person name="Chi J."/>
            <person name="Fu B."/>
            <person name="Langley E."/>
            <person name="Maguire S.F."/>
            <person name="Laird G.K."/>
            <person name="Lloyd D."/>
            <person name="Kenyon E."/>
            <person name="Donaldson S."/>
            <person name="Sehra H."/>
            <person name="Almeida-King J."/>
            <person name="Loveland J."/>
            <person name="Trevanion S."/>
            <person name="Jones M."/>
            <person name="Quail M."/>
            <person name="Willey D."/>
            <person name="Hunt A."/>
            <person name="Burton J."/>
            <person name="Sims S."/>
            <person name="McLay K."/>
            <person name="Plumb B."/>
            <person name="Davis J."/>
            <person name="Clee C."/>
            <person name="Oliver K."/>
            <person name="Clark R."/>
            <person name="Riddle C."/>
            <person name="Elliot D."/>
            <person name="Threadgold G."/>
            <person name="Harden G."/>
            <person name="Ware D."/>
            <person name="Begum S."/>
            <person name="Mortimore B."/>
            <person name="Kerry G."/>
            <person name="Heath P."/>
            <person name="Phillimore B."/>
            <person name="Tracey A."/>
            <person name="Corby N."/>
            <person name="Dunn M."/>
            <person name="Johnson C."/>
            <person name="Wood J."/>
            <person name="Clark S."/>
            <person name="Pelan S."/>
            <person name="Griffiths G."/>
            <person name="Smith M."/>
            <person name="Glithero R."/>
            <person name="Howden P."/>
            <person name="Barker N."/>
            <person name="Lloyd C."/>
            <person name="Stevens C."/>
            <person name="Harley J."/>
            <person name="Holt K."/>
            <person name="Panagiotidis G."/>
            <person name="Lovell J."/>
            <person name="Beasley H."/>
            <person name="Henderson C."/>
            <person name="Gordon D."/>
            <person name="Auger K."/>
            <person name="Wright D."/>
            <person name="Collins J."/>
            <person name="Raisen C."/>
            <person name="Dyer L."/>
            <person name="Leung K."/>
            <person name="Robertson L."/>
            <person name="Ambridge K."/>
            <person name="Leongamornlert D."/>
            <person name="McGuire S."/>
            <person name="Gilderthorp R."/>
            <person name="Griffiths C."/>
            <person name="Manthravadi D."/>
            <person name="Nichol S."/>
            <person name="Barker G."/>
            <person name="Whitehead S."/>
            <person name="Kay M."/>
            <person name="Brown J."/>
            <person name="Murnane C."/>
            <person name="Gray E."/>
            <person name="Humphries M."/>
            <person name="Sycamore N."/>
            <person name="Barker D."/>
            <person name="Saunders D."/>
            <person name="Wallis J."/>
            <person name="Babbage A."/>
            <person name="Hammond S."/>
            <person name="Mashreghi-Mohammadi M."/>
            <person name="Barr L."/>
            <person name="Martin S."/>
            <person name="Wray P."/>
            <person name="Ellington A."/>
            <person name="Matthews N."/>
            <person name="Ellwood M."/>
            <person name="Woodmansey R."/>
            <person name="Clark G."/>
            <person name="Cooper J."/>
            <person name="Tromans A."/>
            <person name="Grafham D."/>
            <person name="Skuce C."/>
            <person name="Pandian R."/>
            <person name="Andrews R."/>
            <person name="Harrison E."/>
            <person name="Kimberley A."/>
            <person name="Garnett J."/>
            <person name="Fosker N."/>
            <person name="Hall R."/>
            <person name="Garner P."/>
            <person name="Kelly D."/>
            <person name="Bird C."/>
            <person name="Palmer S."/>
            <person name="Gehring I."/>
            <person name="Berger A."/>
            <person name="Dooley C.M."/>
            <person name="Ersan-Urun Z."/>
            <person name="Eser C."/>
            <person name="Geiger H."/>
            <person name="Geisler M."/>
            <person name="Karotki L."/>
            <person name="Kirn A."/>
            <person name="Konantz J."/>
            <person name="Konantz M."/>
            <person name="Oberlander M."/>
            <person name="Rudolph-Geiger S."/>
            <person name="Teucke M."/>
            <person name="Lanz C."/>
            <person name="Raddatz G."/>
            <person name="Osoegawa K."/>
            <person name="Zhu B."/>
            <person name="Rapp A."/>
            <person name="Widaa S."/>
            <person name="Langford C."/>
            <person name="Yang F."/>
            <person name="Schuster S.C."/>
            <person name="Carter N.P."/>
            <person name="Harrow J."/>
            <person name="Ning Z."/>
            <person name="Herrero J."/>
            <person name="Searle S.M."/>
            <person name="Enright A."/>
            <person name="Geisler R."/>
            <person name="Plasterk R.H."/>
            <person name="Lee C."/>
            <person name="Westerfield M."/>
            <person name="de Jong P.J."/>
            <person name="Zon L.I."/>
            <person name="Postlethwait J.H."/>
            <person name="Nusslein-Volhard C."/>
            <person name="Hubbard T.J."/>
            <person name="Roest Crollius H."/>
            <person name="Rogers J."/>
            <person name="Stemple D.L."/>
        </authorList>
    </citation>
    <scope>NUCLEOTIDE SEQUENCE [LARGE SCALE GENOMIC DNA]</scope>
    <source>
        <strain>Tuebingen</strain>
    </source>
</reference>
<reference key="2">
    <citation type="submission" date="2005-10" db="EMBL/GenBank/DDBJ databases">
        <authorList>
            <consortium name="NIH - Zebrafish Gene Collection (ZGC) project"/>
        </authorList>
    </citation>
    <scope>NUCLEOTIDE SEQUENCE [LARGE SCALE MRNA]</scope>
    <source>
        <tissue>Testis</tissue>
    </source>
</reference>
<organism>
    <name type="scientific">Danio rerio</name>
    <name type="common">Zebrafish</name>
    <name type="synonym">Brachydanio rerio</name>
    <dbReference type="NCBI Taxonomy" id="7955"/>
    <lineage>
        <taxon>Eukaryota</taxon>
        <taxon>Metazoa</taxon>
        <taxon>Chordata</taxon>
        <taxon>Craniata</taxon>
        <taxon>Vertebrata</taxon>
        <taxon>Euteleostomi</taxon>
        <taxon>Actinopterygii</taxon>
        <taxon>Neopterygii</taxon>
        <taxon>Teleostei</taxon>
        <taxon>Ostariophysi</taxon>
        <taxon>Cypriniformes</taxon>
        <taxon>Danionidae</taxon>
        <taxon>Danioninae</taxon>
        <taxon>Danio</taxon>
    </lineage>
</organism>
<keyword id="KW-0158">Chromosome</keyword>
<keyword id="KW-0227">DNA damage</keyword>
<keyword id="KW-0234">DNA repair</keyword>
<keyword id="KW-0239">DNA-directed DNA polymerase</keyword>
<keyword id="KW-0240">DNA-directed RNA polymerase</keyword>
<keyword id="KW-0464">Manganese</keyword>
<keyword id="KW-0479">Metal-binding</keyword>
<keyword id="KW-0496">Mitochondrion</keyword>
<keyword id="KW-0548">Nucleotidyltransferase</keyword>
<keyword id="KW-0539">Nucleus</keyword>
<keyword id="KW-1185">Reference proteome</keyword>
<keyword id="KW-0804">Transcription</keyword>
<keyword id="KW-0808">Transferase</keyword>
<keyword id="KW-0862">Zinc</keyword>
<name>PRIPO_DANRE</name>
<gene>
    <name evidence="2" type="primary">primpol</name>
    <name evidence="4" type="ORF">zgc:123274</name>
</gene>
<comment type="function">
    <text evidence="1 2">DNA primase and DNA polymerase required to tolerate replication-stalling lesions by bypassing them. Required to facilitate mitochondrial and nuclear replication fork progression by initiating de novo DNA synthesis using dNTPs and acting as an error-prone DNA polymerase able to bypass certain DNA lesions (By similarity). Shows a high capacity to tolerate DNA damage lesions such as 8oxoG and abasic sites in DNA (By similarity). Provides different translesion synthesis alternatives when DNA replication is stalled: able to synthesize DNA primers downstream of lesions, such as UV lesions, R-loops and G-quadruplexes, to allow DNA replication to continue (By similarity). Can also realign primers ahead of 'unreadable lesions' such as abasic sites and 6-4 photoproduct (6-4 pyrimidine-pyrimidinone), thereby skipping the lesion. Repriming avoids fork degradation while leading to accumulation of internal ssDNA gaps behind the forks. Also able to incorporate nucleotides opposite DNA lesions such as 8oxoG, like a regular translesion synthesis DNA polymerase. Also required for reinitiating stalled forks after ultraviolet (UV) damage during nuclear DNA replication. Required for mitochondrial DNA (mtDNA) synthesis and replication, by reinitiating synthesis after UV damage or in the presence of chain-terminating nucleotides. In addition to its role in DNA damage response, also required to maintain efficient nuclear and mitochondrial DNA replication in unperturbed cells (By similarity).</text>
</comment>
<comment type="catalytic activity">
    <reaction evidence="2">
        <text>ssDNA + n NTP = ssDNA/pppN(pN)n-1 hybrid + (n-1) diphosphate.</text>
        <dbReference type="EC" id="2.7.7.102"/>
    </reaction>
</comment>
<comment type="catalytic activity">
    <reaction evidence="2">
        <text>DNA(n) + a 2'-deoxyribonucleoside 5'-triphosphate = DNA(n+1) + diphosphate</text>
        <dbReference type="Rhea" id="RHEA:22508"/>
        <dbReference type="Rhea" id="RHEA-COMP:17339"/>
        <dbReference type="Rhea" id="RHEA-COMP:17340"/>
        <dbReference type="ChEBI" id="CHEBI:33019"/>
        <dbReference type="ChEBI" id="CHEBI:61560"/>
        <dbReference type="ChEBI" id="CHEBI:173112"/>
        <dbReference type="EC" id="2.7.7.7"/>
    </reaction>
    <physiologicalReaction direction="left-to-right" evidence="2">
        <dbReference type="Rhea" id="RHEA:22509"/>
    </physiologicalReaction>
</comment>
<comment type="cofactor">
    <cofactor evidence="2">
        <name>Mn(2+)</name>
        <dbReference type="ChEBI" id="CHEBI:29035"/>
    </cofactor>
    <text evidence="2">Can act both with Mn(2+) and Mg(2+) as cofactor in vitro, but Mn(2+) is the preferred cofactor in vivo.</text>
</comment>
<comment type="subcellular location">
    <subcellularLocation>
        <location evidence="2">Nucleus</location>
    </subcellularLocation>
    <subcellularLocation>
        <location evidence="2">Mitochondrion matrix</location>
    </subcellularLocation>
    <subcellularLocation>
        <location evidence="2">Chromosome</location>
    </subcellularLocation>
</comment>
<comment type="domain">
    <text evidence="2">The zinc knuckle motif binds zinc and is required for the DNA primase activity. It facilitates the binding and selection of the 5'-nucleotide of the newly synthesized primer and the recognition of preferred initiation sites.</text>
</comment>
<comment type="domain">
    <text evidence="2">The presence of an Asp-Aaa-Glu (DxE) motif in the metal-binding active site favors the use of Mn(2+) ions to achieve optimal incoming nucleotide stabilization, especially required during primer synthesis. Glu-119 is required to stabilize the incoming nucleotide at the 3'-site.</text>
</comment>
<comment type="similarity">
    <text evidence="5">Belongs to the eukaryotic-type primase small subunit family.</text>
</comment>
<accession>Q32PL8</accession>
<accession>F1R2H2</accession>